<accession>Q2YXD1</accession>
<organism>
    <name type="scientific">Staphylococcus aureus (strain bovine RF122 / ET3-1)</name>
    <dbReference type="NCBI Taxonomy" id="273036"/>
    <lineage>
        <taxon>Bacteria</taxon>
        <taxon>Bacillati</taxon>
        <taxon>Bacillota</taxon>
        <taxon>Bacilli</taxon>
        <taxon>Bacillales</taxon>
        <taxon>Staphylococcaceae</taxon>
        <taxon>Staphylococcus</taxon>
    </lineage>
</organism>
<feature type="chain" id="PRO_1000093382" description="Endonuclease MutS2">
    <location>
        <begin position="1"/>
        <end position="782"/>
    </location>
</feature>
<feature type="domain" description="Smr" evidence="1">
    <location>
        <begin position="707"/>
        <end position="782"/>
    </location>
</feature>
<feature type="binding site" evidence="1">
    <location>
        <begin position="336"/>
        <end position="343"/>
    </location>
    <ligand>
        <name>ATP</name>
        <dbReference type="ChEBI" id="CHEBI:30616"/>
    </ligand>
</feature>
<sequence length="782" mass="88638">MRQKTLDVLEFEKIKSLVANETISDLGLEKVNQMMPATNFETVVFQMEETDEIAQIYNKHRLPSLSGLSKVSAFIHRADIGGVLNVSELNLIKRLIQVQNQFKTFYNQLVEEDEGVKYPILDDKMNQLPVLTDLFQQINETCDTYDLYDNASYELQGIRSKISSTNQRIRQNLDRIVKSQANQKKLSDAIVTVRNERNVIPVKAEYRQDFNGIVHDQSASGQTLYIEPSSVVEMNNQISRLRHDEAIEKERILTQLTGYVAADKDALLVAEHVMGQLDFLIAKARYSRSIKGTKPIFKEERTVYLPKAYHPLLNRETVVANTIEFMEDIETVIITGPNTGGKTVTLKTLGLIIIMAQSGLLIPTLDGSQLSVFKNVYCDIGDEQSIEQSLSTFSSHMTNIVEILKHADKHSLVLFDELGAGTDPSEGAALAMSILDHVRKIGSLVMATTHYPELKAYSCNREGVMNASVEFDVDTLSPTYKLLMGVPGRSNAFDISKKLGLSLNIINKAKTMIGTDEKEINEMIESLERNYKRVETQRLELDRLVKEAEQVHDDLSKQYQQFQNYEKSLIEEAKEKANQKIKAATKEADDIIKDLRQLREQKGADVKEHELIDKKKRLDDHYEAKSIKQNVQKQKYDKIVAGDEVKVLSYGQKGEVLEIVNDEEAIVQMGIIKMKLPIEDLEKKQKEKVKPTKMVTRQNRQTIKTELDLRGYRYEDALIELDQYLDQAVLSNYEQVYIIHGKGTGALQKGVQQHLKKHKSVSDFRGGMPSEGGFGVTVATLK</sequence>
<dbReference type="EC" id="3.1.-.-" evidence="1"/>
<dbReference type="EC" id="3.6.4.-" evidence="1"/>
<dbReference type="EMBL" id="AJ938182">
    <property type="protein sequence ID" value="CAI80696.1"/>
    <property type="molecule type" value="Genomic_DNA"/>
</dbReference>
<dbReference type="RefSeq" id="WP_001249278.1">
    <property type="nucleotide sequence ID" value="NC_007622.1"/>
</dbReference>
<dbReference type="SMR" id="Q2YXD1"/>
<dbReference type="KEGG" id="sab:SAB1008"/>
<dbReference type="HOGENOM" id="CLU_011252_2_1_9"/>
<dbReference type="GO" id="GO:0005524">
    <property type="term" value="F:ATP binding"/>
    <property type="evidence" value="ECO:0007669"/>
    <property type="project" value="UniProtKB-UniRule"/>
</dbReference>
<dbReference type="GO" id="GO:0016887">
    <property type="term" value="F:ATP hydrolysis activity"/>
    <property type="evidence" value="ECO:0007669"/>
    <property type="project" value="InterPro"/>
</dbReference>
<dbReference type="GO" id="GO:0140664">
    <property type="term" value="F:ATP-dependent DNA damage sensor activity"/>
    <property type="evidence" value="ECO:0007669"/>
    <property type="project" value="InterPro"/>
</dbReference>
<dbReference type="GO" id="GO:0004519">
    <property type="term" value="F:endonuclease activity"/>
    <property type="evidence" value="ECO:0007669"/>
    <property type="project" value="UniProtKB-UniRule"/>
</dbReference>
<dbReference type="GO" id="GO:0030983">
    <property type="term" value="F:mismatched DNA binding"/>
    <property type="evidence" value="ECO:0007669"/>
    <property type="project" value="InterPro"/>
</dbReference>
<dbReference type="GO" id="GO:0043023">
    <property type="term" value="F:ribosomal large subunit binding"/>
    <property type="evidence" value="ECO:0007669"/>
    <property type="project" value="UniProtKB-UniRule"/>
</dbReference>
<dbReference type="GO" id="GO:0019843">
    <property type="term" value="F:rRNA binding"/>
    <property type="evidence" value="ECO:0007669"/>
    <property type="project" value="UniProtKB-UniRule"/>
</dbReference>
<dbReference type="GO" id="GO:0006298">
    <property type="term" value="P:mismatch repair"/>
    <property type="evidence" value="ECO:0007669"/>
    <property type="project" value="InterPro"/>
</dbReference>
<dbReference type="GO" id="GO:0045910">
    <property type="term" value="P:negative regulation of DNA recombination"/>
    <property type="evidence" value="ECO:0007669"/>
    <property type="project" value="InterPro"/>
</dbReference>
<dbReference type="GO" id="GO:0072344">
    <property type="term" value="P:rescue of stalled ribosome"/>
    <property type="evidence" value="ECO:0007669"/>
    <property type="project" value="UniProtKB-UniRule"/>
</dbReference>
<dbReference type="CDD" id="cd03280">
    <property type="entry name" value="ABC_MutS2"/>
    <property type="match status" value="1"/>
</dbReference>
<dbReference type="FunFam" id="3.30.1370.110:FF:000006">
    <property type="entry name" value="Endonuclease MutS2"/>
    <property type="match status" value="1"/>
</dbReference>
<dbReference type="FunFam" id="3.40.50.300:FF:000830">
    <property type="entry name" value="Endonuclease MutS2"/>
    <property type="match status" value="1"/>
</dbReference>
<dbReference type="Gene3D" id="3.30.1370.110">
    <property type="match status" value="1"/>
</dbReference>
<dbReference type="Gene3D" id="3.40.50.300">
    <property type="entry name" value="P-loop containing nucleotide triphosphate hydrolases"/>
    <property type="match status" value="1"/>
</dbReference>
<dbReference type="HAMAP" id="MF_00092">
    <property type="entry name" value="MutS2"/>
    <property type="match status" value="1"/>
</dbReference>
<dbReference type="InterPro" id="IPR000432">
    <property type="entry name" value="DNA_mismatch_repair_MutS_C"/>
</dbReference>
<dbReference type="InterPro" id="IPR007696">
    <property type="entry name" value="DNA_mismatch_repair_MutS_core"/>
</dbReference>
<dbReference type="InterPro" id="IPR036187">
    <property type="entry name" value="DNA_mismatch_repair_MutS_sf"/>
</dbReference>
<dbReference type="InterPro" id="IPR046893">
    <property type="entry name" value="MSSS"/>
</dbReference>
<dbReference type="InterPro" id="IPR045076">
    <property type="entry name" value="MutS"/>
</dbReference>
<dbReference type="InterPro" id="IPR005747">
    <property type="entry name" value="MutS2"/>
</dbReference>
<dbReference type="InterPro" id="IPR027417">
    <property type="entry name" value="P-loop_NTPase"/>
</dbReference>
<dbReference type="InterPro" id="IPR002625">
    <property type="entry name" value="Smr_dom"/>
</dbReference>
<dbReference type="InterPro" id="IPR036063">
    <property type="entry name" value="Smr_dom_sf"/>
</dbReference>
<dbReference type="NCBIfam" id="TIGR01069">
    <property type="entry name" value="mutS2"/>
    <property type="match status" value="1"/>
</dbReference>
<dbReference type="PANTHER" id="PTHR48466:SF2">
    <property type="entry name" value="OS10G0509000 PROTEIN"/>
    <property type="match status" value="1"/>
</dbReference>
<dbReference type="PANTHER" id="PTHR48466">
    <property type="entry name" value="OS10G0509000 PROTEIN-RELATED"/>
    <property type="match status" value="1"/>
</dbReference>
<dbReference type="Pfam" id="PF20297">
    <property type="entry name" value="MSSS"/>
    <property type="match status" value="1"/>
</dbReference>
<dbReference type="Pfam" id="PF00488">
    <property type="entry name" value="MutS_V"/>
    <property type="match status" value="1"/>
</dbReference>
<dbReference type="Pfam" id="PF01713">
    <property type="entry name" value="Smr"/>
    <property type="match status" value="1"/>
</dbReference>
<dbReference type="PIRSF" id="PIRSF005814">
    <property type="entry name" value="MutS_YshD"/>
    <property type="match status" value="1"/>
</dbReference>
<dbReference type="SMART" id="SM00534">
    <property type="entry name" value="MUTSac"/>
    <property type="match status" value="1"/>
</dbReference>
<dbReference type="SMART" id="SM00533">
    <property type="entry name" value="MUTSd"/>
    <property type="match status" value="1"/>
</dbReference>
<dbReference type="SMART" id="SM00463">
    <property type="entry name" value="SMR"/>
    <property type="match status" value="1"/>
</dbReference>
<dbReference type="SUPFAM" id="SSF48334">
    <property type="entry name" value="DNA repair protein MutS, domain III"/>
    <property type="match status" value="1"/>
</dbReference>
<dbReference type="SUPFAM" id="SSF52540">
    <property type="entry name" value="P-loop containing nucleoside triphosphate hydrolases"/>
    <property type="match status" value="1"/>
</dbReference>
<dbReference type="SUPFAM" id="SSF160443">
    <property type="entry name" value="SMR domain-like"/>
    <property type="match status" value="1"/>
</dbReference>
<dbReference type="PROSITE" id="PS00486">
    <property type="entry name" value="DNA_MISMATCH_REPAIR_2"/>
    <property type="match status" value="1"/>
</dbReference>
<dbReference type="PROSITE" id="PS50828">
    <property type="entry name" value="SMR"/>
    <property type="match status" value="1"/>
</dbReference>
<evidence type="ECO:0000255" key="1">
    <source>
        <dbReference type="HAMAP-Rule" id="MF_00092"/>
    </source>
</evidence>
<keyword id="KW-0067">ATP-binding</keyword>
<keyword id="KW-0238">DNA-binding</keyword>
<keyword id="KW-0255">Endonuclease</keyword>
<keyword id="KW-0378">Hydrolase</keyword>
<keyword id="KW-0540">Nuclease</keyword>
<keyword id="KW-0547">Nucleotide-binding</keyword>
<keyword id="KW-0694">RNA-binding</keyword>
<keyword id="KW-0699">rRNA-binding</keyword>
<comment type="function">
    <text evidence="1">Endonuclease that is involved in the suppression of homologous recombination and thus may have a key role in the control of bacterial genetic diversity.</text>
</comment>
<comment type="function">
    <text evidence="1">Acts as a ribosome collision sensor, splitting the ribosome into its 2 subunits. Detects stalled/collided 70S ribosomes which it binds and splits by an ATP-hydrolysis driven conformational change. Acts upstream of the ribosome quality control system (RQC), a ribosome-associated complex that mediates the extraction of incompletely synthesized nascent chains from stalled ribosomes and their subsequent degradation. Probably generates substrates for RQC.</text>
</comment>
<comment type="subunit">
    <text evidence="1">Homodimer. Binds to stalled ribosomes, contacting rRNA.</text>
</comment>
<comment type="similarity">
    <text evidence="1">Belongs to the DNA mismatch repair MutS family. MutS2 subfamily.</text>
</comment>
<protein>
    <recommendedName>
        <fullName evidence="1">Endonuclease MutS2</fullName>
        <ecNumber evidence="1">3.1.-.-</ecNumber>
    </recommendedName>
    <alternativeName>
        <fullName evidence="1">Ribosome-associated protein quality control-upstream factor</fullName>
        <shortName evidence="1">RQC-upstream factor</shortName>
        <shortName evidence="1">RqcU</shortName>
        <ecNumber evidence="1">3.6.4.-</ecNumber>
    </alternativeName>
</protein>
<proteinExistence type="inferred from homology"/>
<reference key="1">
    <citation type="journal article" date="2007" name="PLoS ONE">
        <title>Molecular correlates of host specialization in Staphylococcus aureus.</title>
        <authorList>
            <person name="Herron-Olson L."/>
            <person name="Fitzgerald J.R."/>
            <person name="Musser J.M."/>
            <person name="Kapur V."/>
        </authorList>
    </citation>
    <scope>NUCLEOTIDE SEQUENCE [LARGE SCALE GENOMIC DNA]</scope>
    <source>
        <strain>bovine RF122 / ET3-1</strain>
    </source>
</reference>
<name>MUTS2_STAAB</name>
<gene>
    <name evidence="1" type="primary">mutS2</name>
    <name evidence="1" type="synonym">rqcU</name>
    <name type="ordered locus">SAB1008</name>
</gene>